<proteinExistence type="inferred from homology"/>
<sequence length="314" mass="35251">MAEAADAATLTRKYKYFYETECPDLDHLRSLSVANRWLETEFPLADDAKDVARLSGAELEFYRFLFAFLSAADDLVNVNLGDLSELFTQKDILHYYIEQESIEVVHSRVYSAIQLLLFRNDAVARAGYVEGALGDPAVRRKVDWLERRVAAAESVAEKYVLMILIEGIFFSSSFAAIAYLRTHNLFVVTCQTNDLISRDEAVHTAASCCIFDNYLGGERPPPARIYELFREAWKLSASLFGCAPRGSHILDVEAISAYVEYSADRLLAAIQLPPLFGTPPPGTDFPLALMTAEKHTNFFERRSTNYTGTVINDL</sequence>
<gene>
    <name evidence="1" type="primary">RIR2</name>
    <name type="synonym">UL40</name>
</gene>
<keyword id="KW-0235">DNA replication</keyword>
<keyword id="KW-1043">Host membrane</keyword>
<keyword id="KW-0408">Iron</keyword>
<keyword id="KW-0472">Membrane</keyword>
<keyword id="KW-0479">Metal-binding</keyword>
<keyword id="KW-0560">Oxidoreductase</keyword>
<keyword id="KW-0812">Transmembrane</keyword>
<keyword id="KW-1133">Transmembrane helix</keyword>
<keyword id="KW-1251">Viral latency</keyword>
<keyword id="KW-1272">Viral reactivation from latency</keyword>
<evidence type="ECO:0000255" key="1">
    <source>
        <dbReference type="HAMAP-Rule" id="MF_04028"/>
    </source>
</evidence>
<protein>
    <recommendedName>
        <fullName evidence="1">Ribonucleoside-diphosphate reductase small subunit</fullName>
        <ecNumber evidence="1">1.17.4.1</ecNumber>
    </recommendedName>
    <alternativeName>
        <fullName evidence="1">Ribonucleotide reductase small subunit</fullName>
    </alternativeName>
</protein>
<comment type="function">
    <text evidence="1">Ribonucleoside-diphosphate reductase holoenzyme provides the precursors necessary for viral DNA synthesis. Allows virus growth in non-dividing cells, as well as reactivation from latency in infected hosts. Catalyzes the biosynthesis of deoxyribonucleotides from the corresponding ribonucleotides.</text>
</comment>
<comment type="catalytic activity">
    <reaction evidence="1">
        <text>a 2'-deoxyribonucleoside 5'-diphosphate + [thioredoxin]-disulfide + H2O = a ribonucleoside 5'-diphosphate + [thioredoxin]-dithiol</text>
        <dbReference type="Rhea" id="RHEA:23252"/>
        <dbReference type="Rhea" id="RHEA-COMP:10698"/>
        <dbReference type="Rhea" id="RHEA-COMP:10700"/>
        <dbReference type="ChEBI" id="CHEBI:15377"/>
        <dbReference type="ChEBI" id="CHEBI:29950"/>
        <dbReference type="ChEBI" id="CHEBI:50058"/>
        <dbReference type="ChEBI" id="CHEBI:57930"/>
        <dbReference type="ChEBI" id="CHEBI:73316"/>
        <dbReference type="EC" id="1.17.4.1"/>
    </reaction>
</comment>
<comment type="cofactor">
    <cofactor evidence="1">
        <name>Fe cation</name>
        <dbReference type="ChEBI" id="CHEBI:24875"/>
    </cofactor>
</comment>
<comment type="subunit">
    <text evidence="1">Heterotetramer composed of a homodimer of the large subunit (R1) and a homodimer of the small subunit (R2). Larger multisubunit protein complex are also active, composed of (R1)n(R2)n.</text>
</comment>
<comment type="subcellular location">
    <subcellularLocation>
        <location evidence="1">Host membrane</location>
        <topology evidence="1">Single-pass membrane protein</topology>
    </subcellularLocation>
</comment>
<comment type="similarity">
    <text evidence="1">Belongs to the ribonucleoside diphosphate reductase small chain family.</text>
</comment>
<feature type="chain" id="PRO_0000190507" description="Ribonucleoside-diphosphate reductase small subunit">
    <location>
        <begin position="1"/>
        <end position="314"/>
    </location>
</feature>
<feature type="transmembrane region" description="Helical" evidence="1">
    <location>
        <begin position="160"/>
        <end position="180"/>
    </location>
</feature>
<feature type="active site" evidence="1">
    <location>
        <position position="110"/>
    </location>
</feature>
<feature type="binding site" evidence="1">
    <location>
        <position position="73"/>
    </location>
    <ligand>
        <name>Fe cation</name>
        <dbReference type="ChEBI" id="CHEBI:24875"/>
        <label>1</label>
    </ligand>
</feature>
<feature type="binding site" evidence="1">
    <location>
        <position position="103"/>
    </location>
    <ligand>
        <name>Fe cation</name>
        <dbReference type="ChEBI" id="CHEBI:24875"/>
        <label>1</label>
    </ligand>
</feature>
<feature type="binding site" evidence="1">
    <location>
        <position position="103"/>
    </location>
    <ligand>
        <name>Fe cation</name>
        <dbReference type="ChEBI" id="CHEBI:24875"/>
        <label>2</label>
    </ligand>
</feature>
<feature type="binding site" evidence="1">
    <location>
        <position position="106"/>
    </location>
    <ligand>
        <name>Fe cation</name>
        <dbReference type="ChEBI" id="CHEBI:24875"/>
        <label>1</label>
    </ligand>
</feature>
<feature type="binding site" evidence="1">
    <location>
        <position position="166"/>
    </location>
    <ligand>
        <name>Fe cation</name>
        <dbReference type="ChEBI" id="CHEBI:24875"/>
        <label>2</label>
    </ligand>
</feature>
<feature type="binding site" evidence="1">
    <location>
        <position position="200"/>
    </location>
    <ligand>
        <name>Fe cation</name>
        <dbReference type="ChEBI" id="CHEBI:24875"/>
        <label>2</label>
    </ligand>
</feature>
<feature type="binding site" evidence="1">
    <location>
        <position position="203"/>
    </location>
    <ligand>
        <name>Fe cation</name>
        <dbReference type="ChEBI" id="CHEBI:24875"/>
        <label>2</label>
    </ligand>
</feature>
<organism>
    <name type="scientific">Bovine herpesvirus 1.1 (strain Cooper)</name>
    <name type="common">BoHV-1</name>
    <name type="synonym">Infectious bovine rhinotracheitis virus</name>
    <dbReference type="NCBI Taxonomy" id="10323"/>
    <lineage>
        <taxon>Viruses</taxon>
        <taxon>Duplodnaviria</taxon>
        <taxon>Heunggongvirae</taxon>
        <taxon>Peploviricota</taxon>
        <taxon>Herviviricetes</taxon>
        <taxon>Herpesvirales</taxon>
        <taxon>Orthoherpesviridae</taxon>
        <taxon>Alphaherpesvirinae</taxon>
        <taxon>Varicellovirus</taxon>
        <taxon>Varicellovirus bovinealpha1</taxon>
    </lineage>
</organism>
<reference key="1">
    <citation type="journal article" date="1992" name="Virology">
        <title>Sequencing and 5'- and 3'-end transcript mapping of the gene encoding the small subunit of ribonucleotide reductase from bovine herpesvirus type-1.</title>
        <authorList>
            <person name="Simard C."/>
            <person name="Bastien N."/>
            <person name="Trudel M."/>
        </authorList>
    </citation>
    <scope>NUCLEOTIDE SEQUENCE [GENOMIC DNA]</scope>
    <source>
        <strain>Cooper / 34</strain>
    </source>
</reference>
<reference key="2">
    <citation type="journal article" date="1995" name="Virology">
        <title>Sequence analysis of the UL39, UL38, and UL37 homologues of bovine herpesvirus 1 and expression studies of UL40 and UL39, the subunits of ribonucleotide reductase.</title>
        <authorList>
            <person name="Simard C."/>
            <person name="Langlois I."/>
            <person name="Styger D."/>
            <person name="Vogt B."/>
            <person name="Vlcek C."/>
            <person name="Chalifour A."/>
            <person name="Trudel M."/>
            <person name="Schwyzer M."/>
        </authorList>
    </citation>
    <scope>NUCLEOTIDE SEQUENCE [GENOMIC DNA]</scope>
</reference>
<reference key="3">
    <citation type="journal article" date="1996" name="Vet. Microbiol.">
        <title>Gene contents in a 31-kb segment at the left genome end of bovine herpesvirus-1.</title>
        <authorList>
            <person name="Schwyzer M."/>
            <person name="Styger D."/>
            <person name="Vogt B."/>
            <person name="Lowery D.E."/>
            <person name="Simard C."/>
            <person name="LaBoissiere S."/>
            <person name="Misra V."/>
            <person name="Vlcek C."/>
            <person name="Paces V."/>
        </authorList>
    </citation>
    <scope>NUCLEOTIDE SEQUENCE [GENOMIC DNA]</scope>
</reference>
<reference key="4">
    <citation type="journal article" date="2009" name="Trends Biochem. Sci.">
        <title>Tinkering with a viral ribonucleotide reductase.</title>
        <authorList>
            <person name="Lembo D."/>
            <person name="Brune W."/>
        </authorList>
    </citation>
    <scope>REVIEW</scope>
</reference>
<name>RIR2_BHV1C</name>
<accession>Q01319</accession>
<organismHost>
    <name type="scientific">Bos taurus</name>
    <name type="common">Bovine</name>
    <dbReference type="NCBI Taxonomy" id="9913"/>
</organismHost>
<dbReference type="EC" id="1.17.4.1" evidence="1"/>
<dbReference type="EMBL" id="Z54206">
    <property type="protein sequence ID" value="CAA90928.1"/>
    <property type="molecule type" value="Genomic_DNA"/>
</dbReference>
<dbReference type="EMBL" id="M84470">
    <property type="protein sequence ID" value="AAA46063.1"/>
    <property type="molecule type" value="Genomic_DNA"/>
</dbReference>
<dbReference type="EMBL" id="Z49078">
    <property type="protein sequence ID" value="CAA88899.1"/>
    <property type="molecule type" value="Genomic_DNA"/>
</dbReference>
<dbReference type="EMBL" id="AJ004801">
    <property type="protein sequence ID" value="CAA06093.1"/>
    <property type="molecule type" value="Genomic_DNA"/>
</dbReference>
<dbReference type="PIR" id="A43367">
    <property type="entry name" value="WMBEB4"/>
</dbReference>
<dbReference type="RefSeq" id="NP_045318.1">
    <property type="nucleotide sequence ID" value="NC_001847.1"/>
</dbReference>
<dbReference type="SMR" id="Q01319"/>
<dbReference type="Proteomes" id="UP000202075">
    <property type="component" value="Segment"/>
</dbReference>
<dbReference type="GO" id="GO:0033644">
    <property type="term" value="C:host cell membrane"/>
    <property type="evidence" value="ECO:0007669"/>
    <property type="project" value="UniProtKB-SubCell"/>
</dbReference>
<dbReference type="GO" id="GO:0016020">
    <property type="term" value="C:membrane"/>
    <property type="evidence" value="ECO:0007669"/>
    <property type="project" value="UniProtKB-KW"/>
</dbReference>
<dbReference type="GO" id="GO:0046872">
    <property type="term" value="F:metal ion binding"/>
    <property type="evidence" value="ECO:0007669"/>
    <property type="project" value="UniProtKB-KW"/>
</dbReference>
<dbReference type="GO" id="GO:0004748">
    <property type="term" value="F:ribonucleoside-diphosphate reductase activity, thioredoxin disulfide as acceptor"/>
    <property type="evidence" value="ECO:0007669"/>
    <property type="project" value="UniProtKB-EC"/>
</dbReference>
<dbReference type="GO" id="GO:0009263">
    <property type="term" value="P:deoxyribonucleotide biosynthetic process"/>
    <property type="evidence" value="ECO:0007669"/>
    <property type="project" value="InterPro"/>
</dbReference>
<dbReference type="GO" id="GO:0006260">
    <property type="term" value="P:DNA replication"/>
    <property type="evidence" value="ECO:0007669"/>
    <property type="project" value="UniProtKB-KW"/>
</dbReference>
<dbReference type="GO" id="GO:0019046">
    <property type="term" value="P:release from viral latency"/>
    <property type="evidence" value="ECO:0007669"/>
    <property type="project" value="UniProtKB-KW"/>
</dbReference>
<dbReference type="CDD" id="cd01049">
    <property type="entry name" value="RNRR2"/>
    <property type="match status" value="1"/>
</dbReference>
<dbReference type="Gene3D" id="1.10.620.20">
    <property type="entry name" value="Ribonucleotide Reductase, subunit A"/>
    <property type="match status" value="1"/>
</dbReference>
<dbReference type="HAMAP" id="MF_04028">
    <property type="entry name" value="HSV_RIR2"/>
    <property type="match status" value="1"/>
</dbReference>
<dbReference type="InterPro" id="IPR009078">
    <property type="entry name" value="Ferritin-like_SF"/>
</dbReference>
<dbReference type="InterPro" id="IPR034715">
    <property type="entry name" value="HSV_RIR2"/>
</dbReference>
<dbReference type="InterPro" id="IPR012348">
    <property type="entry name" value="RNR-like"/>
</dbReference>
<dbReference type="InterPro" id="IPR033909">
    <property type="entry name" value="RNR_small"/>
</dbReference>
<dbReference type="InterPro" id="IPR030475">
    <property type="entry name" value="RNR_small_AS"/>
</dbReference>
<dbReference type="InterPro" id="IPR000358">
    <property type="entry name" value="RNR_small_fam"/>
</dbReference>
<dbReference type="PANTHER" id="PTHR23409">
    <property type="entry name" value="RIBONUCLEOSIDE-DIPHOSPHATE REDUCTASE SMALL CHAIN"/>
    <property type="match status" value="1"/>
</dbReference>
<dbReference type="PANTHER" id="PTHR23409:SF18">
    <property type="entry name" value="RIBONUCLEOSIDE-DIPHOSPHATE REDUCTASE SUBUNIT M2"/>
    <property type="match status" value="1"/>
</dbReference>
<dbReference type="Pfam" id="PF00268">
    <property type="entry name" value="Ribonuc_red_sm"/>
    <property type="match status" value="1"/>
</dbReference>
<dbReference type="SUPFAM" id="SSF47240">
    <property type="entry name" value="Ferritin-like"/>
    <property type="match status" value="1"/>
</dbReference>
<dbReference type="PROSITE" id="PS00368">
    <property type="entry name" value="RIBORED_SMALL"/>
    <property type="match status" value="1"/>
</dbReference>